<evidence type="ECO:0000250" key="1">
    <source>
        <dbReference type="UniProtKB" id="Q9JJ28"/>
    </source>
</evidence>
<evidence type="ECO:0000255" key="2"/>
<evidence type="ECO:0000256" key="3">
    <source>
        <dbReference type="SAM" id="MobiDB-lite"/>
    </source>
</evidence>
<evidence type="ECO:0000269" key="4">
    <source>
    </source>
</evidence>
<evidence type="ECO:0000269" key="5">
    <source>
    </source>
</evidence>
<evidence type="ECO:0000269" key="6">
    <source>
    </source>
</evidence>
<evidence type="ECO:0000269" key="7">
    <source>
    </source>
</evidence>
<evidence type="ECO:0000269" key="8">
    <source>
    </source>
</evidence>
<evidence type="ECO:0000269" key="9">
    <source>
    </source>
</evidence>
<evidence type="ECO:0000269" key="10">
    <source>
    </source>
</evidence>
<evidence type="ECO:0000269" key="11">
    <source>
    </source>
</evidence>
<evidence type="ECO:0000269" key="12">
    <source>
    </source>
</evidence>
<evidence type="ECO:0000269" key="13">
    <source>
    </source>
</evidence>
<evidence type="ECO:0000303" key="14">
    <source>
    </source>
</evidence>
<evidence type="ECO:0000305" key="15"/>
<evidence type="ECO:0007744" key="16">
    <source>
    </source>
</evidence>
<evidence type="ECO:0007744" key="17">
    <source>
    </source>
</evidence>
<evidence type="ECO:0007744" key="18">
    <source>
    </source>
</evidence>
<evidence type="ECO:0007744" key="19">
    <source>
    </source>
</evidence>
<evidence type="ECO:0007744" key="20">
    <source>
    </source>
</evidence>
<evidence type="ECO:0007744" key="21">
    <source>
    </source>
</evidence>
<evidence type="ECO:0007744" key="22">
    <source>
    </source>
</evidence>
<evidence type="ECO:0007744" key="23">
    <source>
    </source>
</evidence>
<evidence type="ECO:0007744" key="24">
    <source>
    </source>
</evidence>
<evidence type="ECO:0007744" key="25">
    <source>
    </source>
</evidence>
<evidence type="ECO:0007744" key="26">
    <source>
    </source>
</evidence>
<evidence type="ECO:0007744" key="27">
    <source>
    </source>
</evidence>
<sequence>MEATGVLPFVRGVDLSGNDFKGGYFPENVKAMTSLRWLKLNRTGLCYLPEELAALQKLEHLSVSHNNLTTLHGELSSLPSLRAIVARANSLKNSGVPDDIFKLDDLSVLDLSHNQLTECPRELENAKNMLVLNLSHNSIDTIPNQLFINLTDLLYLDLSENRLESLPPQMRRLVHLQTLVLNGNPLLHAQLRQLPAMTALQTLHLRSTQRTQSNLPTSLEGLSNLADVDLSCNDLTRVPECLYTLPSLRRLNLSSNQITELSLCIDQWVHVETLNLSRNQLTSLPSAICKLSKLKKLYLNSNKLDFDGLPSGIGKLTNLEEFMAANNNLELVPESLCRCPKLRKLVLNKNHLVTLPEAIHFLTEIEVLDVRENPNLVMPPKPADRAAEWYNIDFSLQNQLRLAGASPATVAAAAAAGSGPKDPMARKMRLRRRKDSAQDDQAKQVLKGMSDVAQEKNKKQEESADARAPSGKVRRWDQGLEKPRLDYSEFFTEDVGQLPGLTIWQIENFVPVLVEEAFHGKFYEADCYIVLKTFLDDSGSLNWEIYYWIGGEATLDKKACSAIHAVNLRNYLGAECRTVREEMGDESEEFLQVFDNDISYIEGGTASGFYTVEDTHYVTRMYRVYGKKNIKLEPVPLKGTSLDPRFVFLLDRGLDIYVWRGAQATLSSTTKARLFAEKINKNERKGKAEITLLVQGQELPEFWEALGGEPSEIKKHVPEDFWPPQPKLYKVGLGLGYLELPQINYKLSVEHKQRPKVELMPRMRLLQSLLDTRCVYILDCWSDVFIWLGRKSPRLVRAAALKLGQELCGMLHRPRHATVSRSLEGTEAQVFKAKFKNWDDVLTVDYTRNAEAVLQSPGLSGKVKRDAEKKDQMKADLTALFLPRQPPMSLAEAEQLMEEWNEDLDGMEGFVLEGKKFARLPEEEFGHFYTQDCYVFLCRYWVPVEYEEEEKKEDKEEKAEGKEGEEATAEAEEKQPEEDFQCIVYFWQGREASNMGWLTFTFSLQKKFESLFPGKLEVVRMTQQQENPKFLSHFKRKFIIHRGKRKAVQGAQQPSLYQIRTNGSALCTRCIQINTDSSLLNSEFCFILKVPFESEDNQGIVYAWVGRASDPDEAKLAEDILNTMFDTSYSKQVINEGEEPENFFWVGIGAQKPYDDDAEYMKHTRLFRCSNEKGYFAVTEKCSDFCQDDLADDDIMLLDNGQEVYMWVGTQTSQVEIKLSLKACQVYIQHMRSKEHERPRRLRLVRKGNEQHAFTRCFHAWSAFCKALA</sequence>
<dbReference type="EMBL" id="U80184">
    <property type="protein sequence ID" value="AAC02796.1"/>
    <property type="molecule type" value="Genomic_DNA"/>
</dbReference>
<dbReference type="EMBL" id="AK295655">
    <property type="protein sequence ID" value="BAG58522.1"/>
    <property type="status" value="ALT_INIT"/>
    <property type="molecule type" value="mRNA"/>
</dbReference>
<dbReference type="EMBL" id="AC127537">
    <property type="status" value="NOT_ANNOTATED_CDS"/>
    <property type="molecule type" value="Genomic_DNA"/>
</dbReference>
<dbReference type="EMBL" id="BC025300">
    <property type="protein sequence ID" value="AAH25300.1"/>
    <property type="molecule type" value="mRNA"/>
</dbReference>
<dbReference type="EMBL" id="U01184">
    <property type="protein sequence ID" value="AAC03568.1"/>
    <property type="molecule type" value="mRNA"/>
</dbReference>
<dbReference type="CCDS" id="CCDS11192.1">
    <molecule id="Q13045-1"/>
</dbReference>
<dbReference type="CCDS" id="CCDS58521.1">
    <molecule id="Q13045-3"/>
</dbReference>
<dbReference type="CCDS" id="CCDS58522.1">
    <molecule id="Q13045-2"/>
</dbReference>
<dbReference type="PIR" id="A49674">
    <property type="entry name" value="A49674"/>
</dbReference>
<dbReference type="RefSeq" id="NP_001243193.1">
    <molecule id="Q13045-3"/>
    <property type="nucleotide sequence ID" value="NM_001256264.2"/>
</dbReference>
<dbReference type="RefSeq" id="NP_001243194.1">
    <molecule id="Q13045-2"/>
    <property type="nucleotide sequence ID" value="NM_001256265.2"/>
</dbReference>
<dbReference type="RefSeq" id="NP_002009.1">
    <molecule id="Q13045-1"/>
    <property type="nucleotide sequence ID" value="NM_002018.4"/>
</dbReference>
<dbReference type="SMR" id="Q13045"/>
<dbReference type="BioGRID" id="108603">
    <property type="interactions" value="320"/>
</dbReference>
<dbReference type="FunCoup" id="Q13045">
    <property type="interactions" value="3110"/>
</dbReference>
<dbReference type="IntAct" id="Q13045">
    <property type="interactions" value="115"/>
</dbReference>
<dbReference type="MINT" id="Q13045"/>
<dbReference type="STRING" id="9606.ENSP00000324573"/>
<dbReference type="GlyGen" id="Q13045">
    <property type="glycosylation" value="1 site, 1 O-linked glycan (1 site)"/>
</dbReference>
<dbReference type="iPTMnet" id="Q13045"/>
<dbReference type="MetOSite" id="Q13045"/>
<dbReference type="PhosphoSitePlus" id="Q13045"/>
<dbReference type="SwissPalm" id="Q13045"/>
<dbReference type="BioMuta" id="FLII"/>
<dbReference type="DMDM" id="18202493"/>
<dbReference type="jPOST" id="Q13045"/>
<dbReference type="MassIVE" id="Q13045"/>
<dbReference type="PaxDb" id="9606-ENSP00000324573"/>
<dbReference type="PeptideAtlas" id="Q13045"/>
<dbReference type="ProteomicsDB" id="26432"/>
<dbReference type="ProteomicsDB" id="59121">
    <molecule id="Q13045-1"/>
</dbReference>
<dbReference type="Pumba" id="Q13045"/>
<dbReference type="Antibodypedia" id="1881">
    <property type="antibodies" value="169 antibodies from 33 providers"/>
</dbReference>
<dbReference type="DNASU" id="2314"/>
<dbReference type="Ensembl" id="ENST00000327031.9">
    <molecule id="Q13045-1"/>
    <property type="protein sequence ID" value="ENSP00000324573.4"/>
    <property type="gene ID" value="ENSG00000177731.16"/>
</dbReference>
<dbReference type="Ensembl" id="ENST00000545457.6">
    <molecule id="Q13045-2"/>
    <property type="protein sequence ID" value="ENSP00000438536.2"/>
    <property type="gene ID" value="ENSG00000177731.16"/>
</dbReference>
<dbReference type="Ensembl" id="ENST00000579294.5">
    <molecule id="Q13045-3"/>
    <property type="protein sequence ID" value="ENSP00000463534.1"/>
    <property type="gene ID" value="ENSG00000177731.16"/>
</dbReference>
<dbReference type="Ensembl" id="ENST00000638207.2">
    <molecule id="Q13045-1"/>
    <property type="protein sequence ID" value="ENSP00000491480.1"/>
    <property type="gene ID" value="ENSG00000284571.3"/>
</dbReference>
<dbReference type="Ensembl" id="ENST00000638404.1">
    <molecule id="Q13045-2"/>
    <property type="protein sequence ID" value="ENSP00000492392.1"/>
    <property type="gene ID" value="ENSG00000284571.3"/>
</dbReference>
<dbReference type="Ensembl" id="ENST00000638812.1">
    <molecule id="Q13045-3"/>
    <property type="protein sequence ID" value="ENSP00000491660.1"/>
    <property type="gene ID" value="ENSG00000284571.3"/>
</dbReference>
<dbReference type="GeneID" id="2314"/>
<dbReference type="KEGG" id="hsa:2314"/>
<dbReference type="MANE-Select" id="ENST00000327031.9">
    <property type="protein sequence ID" value="ENSP00000324573.4"/>
    <property type="RefSeq nucleotide sequence ID" value="NM_002018.4"/>
    <property type="RefSeq protein sequence ID" value="NP_002009.1"/>
</dbReference>
<dbReference type="UCSC" id="uc002gsr.3">
    <molecule id="Q13045-1"/>
    <property type="organism name" value="human"/>
</dbReference>
<dbReference type="AGR" id="HGNC:3750"/>
<dbReference type="CTD" id="2314"/>
<dbReference type="DisGeNET" id="2314"/>
<dbReference type="GeneCards" id="FLII"/>
<dbReference type="HGNC" id="HGNC:3750">
    <property type="gene designation" value="FLII"/>
</dbReference>
<dbReference type="HPA" id="ENSG00000177731">
    <property type="expression patterns" value="Tissue enhanced (skeletal)"/>
</dbReference>
<dbReference type="MalaCards" id="FLII"/>
<dbReference type="MIM" id="600362">
    <property type="type" value="gene"/>
</dbReference>
<dbReference type="MIM" id="620635">
    <property type="type" value="phenotype"/>
</dbReference>
<dbReference type="neXtProt" id="NX_Q13045"/>
<dbReference type="OpenTargets" id="ENSG00000177731"/>
<dbReference type="Orphanet" id="819">
    <property type="disease" value="Smith-Magenis syndrome"/>
</dbReference>
<dbReference type="PharmGKB" id="PA28171"/>
<dbReference type="VEuPathDB" id="HostDB:ENSG00000177731"/>
<dbReference type="eggNOG" id="KOG0444">
    <property type="taxonomic scope" value="Eukaryota"/>
</dbReference>
<dbReference type="GeneTree" id="ENSGT00940000156643"/>
<dbReference type="HOGENOM" id="CLU_002568_1_0_1"/>
<dbReference type="InParanoid" id="Q13045"/>
<dbReference type="OMA" id="CFHGWSA"/>
<dbReference type="OrthoDB" id="20529at2759"/>
<dbReference type="PAN-GO" id="Q13045">
    <property type="GO annotations" value="9 GO annotations based on evolutionary models"/>
</dbReference>
<dbReference type="PhylomeDB" id="Q13045"/>
<dbReference type="TreeFam" id="TF313468"/>
<dbReference type="PathwayCommons" id="Q13045"/>
<dbReference type="SignaLink" id="Q13045"/>
<dbReference type="SIGNOR" id="Q13045"/>
<dbReference type="BioGRID-ORCS" id="2314">
    <property type="hits" value="219 hits in 1158 CRISPR screens"/>
</dbReference>
<dbReference type="CD-CODE" id="91857CE7">
    <property type="entry name" value="Nucleolus"/>
</dbReference>
<dbReference type="CD-CODE" id="FB4E32DD">
    <property type="entry name" value="Presynaptic clusters and postsynaptic densities"/>
</dbReference>
<dbReference type="ChiTaRS" id="FLII">
    <property type="organism name" value="human"/>
</dbReference>
<dbReference type="GeneWiki" id="FLII"/>
<dbReference type="GenomeRNAi" id="2314"/>
<dbReference type="Pharos" id="Q13045">
    <property type="development level" value="Tbio"/>
</dbReference>
<dbReference type="PRO" id="PR:Q13045"/>
<dbReference type="Proteomes" id="UP000005640">
    <property type="component" value="Chromosome 17"/>
</dbReference>
<dbReference type="RNAct" id="Q13045">
    <property type="molecule type" value="protein"/>
</dbReference>
<dbReference type="Bgee" id="ENSG00000177731">
    <property type="expression patterns" value="Expressed in lower esophagus mucosa and 92 other cell types or tissues"/>
</dbReference>
<dbReference type="ExpressionAtlas" id="Q13045">
    <property type="expression patterns" value="baseline and differential"/>
</dbReference>
<dbReference type="GO" id="GO:0015629">
    <property type="term" value="C:actin cytoskeleton"/>
    <property type="evidence" value="ECO:0000318"/>
    <property type="project" value="GO_Central"/>
</dbReference>
<dbReference type="GO" id="GO:0005903">
    <property type="term" value="C:brush border"/>
    <property type="evidence" value="ECO:0007669"/>
    <property type="project" value="Ensembl"/>
</dbReference>
<dbReference type="GO" id="GO:0042995">
    <property type="term" value="C:cell projection"/>
    <property type="evidence" value="ECO:0007669"/>
    <property type="project" value="UniProtKB-KW"/>
</dbReference>
<dbReference type="GO" id="GO:0034451">
    <property type="term" value="C:centriolar satellite"/>
    <property type="evidence" value="ECO:0000314"/>
    <property type="project" value="HPA"/>
</dbReference>
<dbReference type="GO" id="GO:0005737">
    <property type="term" value="C:cytoplasm"/>
    <property type="evidence" value="ECO:0000318"/>
    <property type="project" value="GO_Central"/>
</dbReference>
<dbReference type="GO" id="GO:0005829">
    <property type="term" value="C:cytosol"/>
    <property type="evidence" value="ECO:0000314"/>
    <property type="project" value="HPA"/>
</dbReference>
<dbReference type="GO" id="GO:0005925">
    <property type="term" value="C:focal adhesion"/>
    <property type="evidence" value="ECO:0007669"/>
    <property type="project" value="UniProtKB-SubCell"/>
</dbReference>
<dbReference type="GO" id="GO:0005654">
    <property type="term" value="C:nucleoplasm"/>
    <property type="evidence" value="ECO:0000314"/>
    <property type="project" value="HPA"/>
</dbReference>
<dbReference type="GO" id="GO:0005634">
    <property type="term" value="C:nucleus"/>
    <property type="evidence" value="ECO:0000318"/>
    <property type="project" value="GO_Central"/>
</dbReference>
<dbReference type="GO" id="GO:0002102">
    <property type="term" value="C:podosome"/>
    <property type="evidence" value="ECO:0000250"/>
    <property type="project" value="UniProtKB"/>
</dbReference>
<dbReference type="GO" id="GO:0003779">
    <property type="term" value="F:actin binding"/>
    <property type="evidence" value="ECO:0000314"/>
    <property type="project" value="HGNC"/>
</dbReference>
<dbReference type="GO" id="GO:0051015">
    <property type="term" value="F:actin filament binding"/>
    <property type="evidence" value="ECO:0000318"/>
    <property type="project" value="GO_Central"/>
</dbReference>
<dbReference type="GO" id="GO:0005546">
    <property type="term" value="F:phosphatidylinositol-4,5-bisphosphate binding"/>
    <property type="evidence" value="ECO:0000318"/>
    <property type="project" value="GO_Central"/>
</dbReference>
<dbReference type="GO" id="GO:0051014">
    <property type="term" value="P:actin filament severing"/>
    <property type="evidence" value="ECO:0000318"/>
    <property type="project" value="GO_Central"/>
</dbReference>
<dbReference type="GO" id="GO:0008154">
    <property type="term" value="P:actin polymerization or depolymerization"/>
    <property type="evidence" value="ECO:0000318"/>
    <property type="project" value="GO_Central"/>
</dbReference>
<dbReference type="GO" id="GO:0051016">
    <property type="term" value="P:barbed-end actin filament capping"/>
    <property type="evidence" value="ECO:0000318"/>
    <property type="project" value="GO_Central"/>
</dbReference>
<dbReference type="GO" id="GO:0030239">
    <property type="term" value="P:myofibril assembly"/>
    <property type="evidence" value="ECO:0000318"/>
    <property type="project" value="GO_Central"/>
</dbReference>
<dbReference type="GO" id="GO:0045214">
    <property type="term" value="P:sarcomere organization"/>
    <property type="evidence" value="ECO:0007669"/>
    <property type="project" value="Ensembl"/>
</dbReference>
<dbReference type="CDD" id="cd11280">
    <property type="entry name" value="gelsolin_like"/>
    <property type="match status" value="2"/>
</dbReference>
<dbReference type="CDD" id="cd11290">
    <property type="entry name" value="gelsolin_S1_like"/>
    <property type="match status" value="1"/>
</dbReference>
<dbReference type="CDD" id="cd11292">
    <property type="entry name" value="gelsolin_S3_like"/>
    <property type="match status" value="1"/>
</dbReference>
<dbReference type="CDD" id="cd11288">
    <property type="entry name" value="gelsolin_S5_like"/>
    <property type="match status" value="1"/>
</dbReference>
<dbReference type="CDD" id="cd11291">
    <property type="entry name" value="gelsolin_S6_like"/>
    <property type="match status" value="1"/>
</dbReference>
<dbReference type="FunFam" id="3.80.10.10:FF:000033">
    <property type="entry name" value="FLII, actin remodeling protein"/>
    <property type="match status" value="1"/>
</dbReference>
<dbReference type="FunFam" id="3.80.10.10:FF:000050">
    <property type="entry name" value="FLII, actin remodeling protein"/>
    <property type="match status" value="1"/>
</dbReference>
<dbReference type="FunFam" id="3.80.10.10:FF:000054">
    <property type="entry name" value="FLII, actin remodeling protein"/>
    <property type="match status" value="1"/>
</dbReference>
<dbReference type="FunFam" id="3.40.20.10:FF:000019">
    <property type="entry name" value="protein flightless-1 homolog isoform X1"/>
    <property type="match status" value="1"/>
</dbReference>
<dbReference type="FunFam" id="3.40.20.10:FF:000020">
    <property type="entry name" value="protein flightless-1 homolog isoform X1"/>
    <property type="match status" value="1"/>
</dbReference>
<dbReference type="FunFam" id="3.40.20.10:FF:000030">
    <property type="entry name" value="protein flightless-1 homolog isoform X1"/>
    <property type="match status" value="1"/>
</dbReference>
<dbReference type="FunFam" id="3.40.20.10:FF:000031">
    <property type="entry name" value="protein flightless-1 homolog isoform X1"/>
    <property type="match status" value="1"/>
</dbReference>
<dbReference type="FunFam" id="3.40.20.10:FF:000034">
    <property type="entry name" value="protein flightless-1 homolog isoform X1"/>
    <property type="match status" value="1"/>
</dbReference>
<dbReference type="FunFam" id="3.40.20.10:FF:000021">
    <property type="entry name" value="protein flightless-1 homolog isoform X2"/>
    <property type="match status" value="1"/>
</dbReference>
<dbReference type="Gene3D" id="3.80.10.10">
    <property type="entry name" value="Ribonuclease Inhibitor"/>
    <property type="match status" value="3"/>
</dbReference>
<dbReference type="Gene3D" id="3.40.20.10">
    <property type="entry name" value="Severin"/>
    <property type="match status" value="6"/>
</dbReference>
<dbReference type="InterPro" id="IPR029006">
    <property type="entry name" value="ADF-H/Gelsolin-like_dom_sf"/>
</dbReference>
<dbReference type="InterPro" id="IPR007123">
    <property type="entry name" value="Gelsolin-like_dom"/>
</dbReference>
<dbReference type="InterPro" id="IPR001611">
    <property type="entry name" value="Leu-rich_rpt"/>
</dbReference>
<dbReference type="InterPro" id="IPR003591">
    <property type="entry name" value="Leu-rich_rpt_typical-subtyp"/>
</dbReference>
<dbReference type="InterPro" id="IPR032675">
    <property type="entry name" value="LRR_dom_sf"/>
</dbReference>
<dbReference type="InterPro" id="IPR055414">
    <property type="entry name" value="LRR_R13L4/SHOC2-like"/>
</dbReference>
<dbReference type="InterPro" id="IPR007122">
    <property type="entry name" value="Villin/Gelsolin"/>
</dbReference>
<dbReference type="PANTHER" id="PTHR11977:SF51">
    <property type="entry name" value="PROTEIN FLIGHTLESS-1 HOMOLOG"/>
    <property type="match status" value="1"/>
</dbReference>
<dbReference type="PANTHER" id="PTHR11977">
    <property type="entry name" value="VILLIN"/>
    <property type="match status" value="1"/>
</dbReference>
<dbReference type="Pfam" id="PF00626">
    <property type="entry name" value="Gelsolin"/>
    <property type="match status" value="5"/>
</dbReference>
<dbReference type="Pfam" id="PF00560">
    <property type="entry name" value="LRR_1"/>
    <property type="match status" value="1"/>
</dbReference>
<dbReference type="Pfam" id="PF23598">
    <property type="entry name" value="LRR_14"/>
    <property type="match status" value="1"/>
</dbReference>
<dbReference type="Pfam" id="PF13855">
    <property type="entry name" value="LRR_8"/>
    <property type="match status" value="2"/>
</dbReference>
<dbReference type="PRINTS" id="PR00597">
    <property type="entry name" value="GELSOLIN"/>
</dbReference>
<dbReference type="PRINTS" id="PR00019">
    <property type="entry name" value="LEURICHRPT"/>
</dbReference>
<dbReference type="SMART" id="SM00262">
    <property type="entry name" value="GEL"/>
    <property type="match status" value="6"/>
</dbReference>
<dbReference type="SMART" id="SM00364">
    <property type="entry name" value="LRR_BAC"/>
    <property type="match status" value="7"/>
</dbReference>
<dbReference type="SMART" id="SM00365">
    <property type="entry name" value="LRR_SD22"/>
    <property type="match status" value="4"/>
</dbReference>
<dbReference type="SMART" id="SM00369">
    <property type="entry name" value="LRR_TYP"/>
    <property type="match status" value="9"/>
</dbReference>
<dbReference type="SUPFAM" id="SSF55753">
    <property type="entry name" value="Actin depolymerizing proteins"/>
    <property type="match status" value="6"/>
</dbReference>
<dbReference type="SUPFAM" id="SSF52058">
    <property type="entry name" value="L domain-like"/>
    <property type="match status" value="2"/>
</dbReference>
<dbReference type="PROSITE" id="PS51450">
    <property type="entry name" value="LRR"/>
    <property type="match status" value="11"/>
</dbReference>
<name>FLII_HUMAN</name>
<feature type="chain" id="PRO_0000218750" description="Protein flightless-1 homolog">
    <location>
        <begin position="1"/>
        <end position="1269"/>
    </location>
</feature>
<feature type="repeat" description="LRR 1" evidence="2">
    <location>
        <begin position="7"/>
        <end position="32"/>
    </location>
</feature>
<feature type="repeat" description="LRR 2" evidence="2">
    <location>
        <begin position="33"/>
        <end position="55"/>
    </location>
</feature>
<feature type="repeat" description="LRR 3" evidence="2">
    <location>
        <begin position="56"/>
        <end position="78"/>
    </location>
</feature>
<feature type="repeat" description="LRR 4" evidence="2">
    <location>
        <begin position="80"/>
        <end position="103"/>
    </location>
</feature>
<feature type="repeat" description="LRR 5" evidence="2">
    <location>
        <begin position="104"/>
        <end position="126"/>
    </location>
</feature>
<feature type="repeat" description="LRR 6" evidence="2">
    <location>
        <begin position="127"/>
        <end position="149"/>
    </location>
</feature>
<feature type="repeat" description="LRR 7" evidence="2">
    <location>
        <begin position="150"/>
        <end position="173"/>
    </location>
</feature>
<feature type="repeat" description="LRR 8" evidence="2">
    <location>
        <begin position="175"/>
        <end position="196"/>
    </location>
</feature>
<feature type="repeat" description="LRR 9" evidence="2">
    <location>
        <begin position="197"/>
        <end position="222"/>
    </location>
</feature>
<feature type="repeat" description="LRR 10" evidence="2">
    <location>
        <begin position="223"/>
        <end position="245"/>
    </location>
</feature>
<feature type="repeat" description="LRR 11" evidence="2">
    <location>
        <begin position="247"/>
        <end position="268"/>
    </location>
</feature>
<feature type="repeat" description="LRR 12" evidence="2">
    <location>
        <begin position="269"/>
        <end position="291"/>
    </location>
</feature>
<feature type="repeat" description="LRR 13" evidence="2">
    <location>
        <begin position="293"/>
        <end position="316"/>
    </location>
</feature>
<feature type="repeat" description="LRR 14" evidence="2">
    <location>
        <begin position="318"/>
        <end position="339"/>
    </location>
</feature>
<feature type="repeat" description="LRR 15" evidence="2">
    <location>
        <begin position="340"/>
        <end position="363"/>
    </location>
</feature>
<feature type="repeat" description="LRR 16" evidence="2">
    <location>
        <begin position="365"/>
        <end position="385"/>
    </location>
</feature>
<feature type="repeat" description="Gelsolin-like 1" evidence="2">
    <location>
        <begin position="509"/>
        <end position="591"/>
    </location>
</feature>
<feature type="repeat" description="Gelsolin-like 2" evidence="2">
    <location>
        <begin position="629"/>
        <end position="703"/>
    </location>
</feature>
<feature type="repeat" description="Gelsolin-like 3" evidence="2">
    <location>
        <begin position="758"/>
        <end position="831"/>
    </location>
</feature>
<feature type="repeat" description="Gelsolin-like 4" evidence="2">
    <location>
        <begin position="1075"/>
        <end position="1143"/>
    </location>
</feature>
<feature type="repeat" description="Gelsolin-like 5" evidence="2">
    <location>
        <begin position="1181"/>
        <end position="1254"/>
    </location>
</feature>
<feature type="region of interest" description="Interaction with LRRFIP1 and LRRFIP2">
    <location>
        <begin position="1"/>
        <end position="427"/>
    </location>
</feature>
<feature type="region of interest" description="Disordered" evidence="3">
    <location>
        <begin position="452"/>
        <end position="473"/>
    </location>
</feature>
<feature type="region of interest" description="Interaction with ACTL6A" evidence="6">
    <location>
        <begin position="495"/>
        <end position="827"/>
    </location>
</feature>
<feature type="region of interest" description="Disordered" evidence="3">
    <location>
        <begin position="951"/>
        <end position="975"/>
    </location>
</feature>
<feature type="compositionally biased region" description="Basic and acidic residues" evidence="3">
    <location>
        <begin position="453"/>
        <end position="465"/>
    </location>
</feature>
<feature type="compositionally biased region" description="Basic and acidic residues" evidence="3">
    <location>
        <begin position="952"/>
        <end position="965"/>
    </location>
</feature>
<feature type="compositionally biased region" description="Acidic residues" evidence="3">
    <location>
        <begin position="966"/>
        <end position="975"/>
    </location>
</feature>
<feature type="modified residue" description="N-acetylmethionine" evidence="5 24 25">
    <location>
        <position position="1"/>
    </location>
</feature>
<feature type="modified residue" description="N6-acetyllysine" evidence="20">
    <location>
        <position position="21"/>
    </location>
</feature>
<feature type="modified residue" description="Phosphoserine" evidence="16 22 26">
    <location>
        <position position="406"/>
    </location>
</feature>
<feature type="modified residue" description="Phosphoserine; by SGK3" evidence="8 22 23 27">
    <location>
        <position position="436"/>
    </location>
</feature>
<feature type="modified residue" description="Phosphothreonine; by SGK3" evidence="8">
    <location>
        <position position="818"/>
    </location>
</feature>
<feature type="modified residue" description="Phosphoserine" evidence="16 17 18 19 21 22 23 26 27">
    <location>
        <position position="856"/>
    </location>
</feature>
<feature type="modified residue" description="Phosphoserine" evidence="26">
    <location>
        <position position="860"/>
    </location>
</feature>
<feature type="splice variant" id="VSP_046887" description="In isoform 3." evidence="15">
    <original>MEATGVLPFVRGVDLSGNDFK</original>
    <variation>MDLRGLRPVP</variation>
    <location>
        <begin position="1"/>
        <end position="21"/>
    </location>
</feature>
<feature type="splice variant" id="VSP_044686" description="In isoform 2." evidence="14">
    <location>
        <begin position="138"/>
        <end position="191"/>
    </location>
</feature>
<feature type="splice variant" id="VSP_044687" description="In isoform 2." evidence="14">
    <location>
        <position position="416"/>
    </location>
</feature>
<feature type="sequence variant" id="VAR_089120" description="In CMD2J; likely pathogenic." evidence="11">
    <location>
        <begin position="454"/>
        <end position="1269"/>
    </location>
</feature>
<feature type="sequence variant" id="VAR_089121" description="In CMD2J; uncertain significance." evidence="9">
    <original>L</original>
    <variation>V</variation>
    <location>
        <position position="674"/>
    </location>
</feature>
<feature type="sequence variant" id="VAR_089122" description="In CMD2J; likely pathogenic." evidence="11">
    <original>R</original>
    <variation>W</variation>
    <location>
        <position position="1168"/>
    </location>
</feature>
<feature type="sequence variant" id="VAR_089123" description="In CMD2J; likely pathogenic; the orthologous mutation in zebrafish results in disorganized cardiac myofibrils and abnormal morphology of the ventricular trabecular network." evidence="9 11">
    <original>R</original>
    <variation>C</variation>
    <location>
        <position position="1240"/>
    </location>
</feature>
<feature type="sequence variant" id="VAR_029258" description="In dbSNP:rs8821.">
    <original>R</original>
    <variation>H</variation>
    <location>
        <position position="1243"/>
    </location>
</feature>
<feature type="mutagenesis site" description="No change in ESR1 binding but reduced binding to ACTL6A and reduced coactivator function." evidence="6">
    <original>E</original>
    <variation>K</variation>
    <location>
        <position position="586"/>
    </location>
</feature>
<feature type="mutagenesis site" description="No change in binding to ACTL6A or in coactivator function." evidence="6">
    <original>G</original>
    <variation>S</variation>
    <location>
        <position position="603"/>
    </location>
</feature>
<feature type="sequence conflict" description="In Ref. 2; BAG58522." evidence="15" ref="2">
    <original>M</original>
    <variation>V</variation>
    <location>
        <position position="1"/>
    </location>
</feature>
<feature type="sequence conflict" description="In Ref. 2; BAG58522." evidence="15" ref="2">
    <original>Y</original>
    <variation>N</variation>
    <location>
        <position position="298"/>
    </location>
</feature>
<accession>Q13045</accession>
<accession>B4DIL0</accession>
<accession>F5H407</accession>
<accession>J3QLG3</accession>
<keyword id="KW-0007">Acetylation</keyword>
<keyword id="KW-0009">Actin-binding</keyword>
<keyword id="KW-0010">Activator</keyword>
<keyword id="KW-0025">Alternative splicing</keyword>
<keyword id="KW-0122">Cardiomyopathy</keyword>
<keyword id="KW-0965">Cell junction</keyword>
<keyword id="KW-0966">Cell projection</keyword>
<keyword id="KW-0963">Cytoplasm</keyword>
<keyword id="KW-0206">Cytoskeleton</keyword>
<keyword id="KW-0903">Direct protein sequencing</keyword>
<keyword id="KW-0225">Disease variant</keyword>
<keyword id="KW-0433">Leucine-rich repeat</keyword>
<keyword id="KW-0539">Nucleus</keyword>
<keyword id="KW-0597">Phosphoprotein</keyword>
<keyword id="KW-1267">Proteomics identification</keyword>
<keyword id="KW-1185">Reference proteome</keyword>
<keyword id="KW-0677">Repeat</keyword>
<keyword id="KW-0804">Transcription</keyword>
<keyword id="KW-0805">Transcription regulation</keyword>
<gene>
    <name type="primary">FLII</name>
    <name type="synonym">FLIL</name>
</gene>
<proteinExistence type="evidence at protein level"/>
<comment type="function">
    <text evidence="1 6">Is a regulator of actin polymerization, required for proper myofibril organization and regulation of the length of sarcomeric thin filaments (By similarity). It also plays a role in the assembly of cardiomyocyte cell adhesion complexes (By similarity). Regulates cytoskeletal rearrangements involved in cytokinesis and cell migration, by inhibiting Rac1-dependent paxillin phosphorylation (By similarity). May play a role as coactivator in transcriptional activation by hormone-activated nuclear receptors (NR) and acts in cooperation with NCOA2 and CARM1 (PubMed:14966289). Involved in estrogen hormone signaling.</text>
</comment>
<comment type="subunit">
    <text evidence="1 4 6 7 8 10 12 13">Interacts with actin, ACTL6A, NCOA2 and CARM1 (PubMed:14966289, PubMed:9525888). Interacts with LRRFIP1, LRRFIP2 and MYD88 (PubMed:10366446, PubMed:19265123, PubMed:9525888, PubMed:9671805). Upon LPS stimulation, LRRFIP2 competes for MYD88-binding. LRRFIP1 constitutively blocks the interaction with MyD88, even in the absence of LPS. Interacts with the nuclear receptors ESR1 and THRB (PubMed:14966289). Interacts with SGK3 (PubMed:19293151). Interacts (via the gelsolin-like region) with TMOD1 (By similarity). Interacts with (via the gelsolin-like region) TMOD3 (PubMed:37126682). Interacts with LMOD2, VCL, GSN and DES (By similarity).</text>
</comment>
<comment type="interaction">
    <interactant intactId="EBI-351549">
        <id>Q13045</id>
    </interactant>
    <interactant intactId="EBI-1369100">
        <id>Q32MZ4</id>
        <label>LRRFIP1</label>
    </interactant>
    <organismsDiffer>false</organismsDiffer>
    <experiments>5</experiments>
</comment>
<comment type="interaction">
    <interactant intactId="EBI-351549">
        <id>Q13045</id>
    </interactant>
    <interactant intactId="EBI-1023718">
        <id>Q9Y608</id>
        <label>LRRFIP2</label>
    </interactant>
    <organismsDiffer>false</organismsDiffer>
    <experiments>4</experiments>
</comment>
<comment type="subcellular location">
    <subcellularLocation>
        <location evidence="1">Nucleus</location>
    </subcellularLocation>
    <subcellularLocation>
        <location evidence="1">Cytoplasm</location>
        <location evidence="1">Cytoskeleton</location>
    </subcellularLocation>
    <subcellularLocation>
        <location evidence="1">Cytoplasm</location>
        <location evidence="1">Cytoskeleton</location>
        <location evidence="1">Microtubule organizing center</location>
        <location evidence="1">Centrosome</location>
    </subcellularLocation>
    <subcellularLocation>
        <location evidence="1">Cell projection</location>
        <location evidence="1">Podosome</location>
    </subcellularLocation>
    <subcellularLocation>
        <location evidence="1">Cell junction</location>
        <location evidence="1">Focal adhesion</location>
    </subcellularLocation>
    <text evidence="1">Colocalizes to actin-rich structures in blastocysts and, together with HRAS, RHOA and CDC42, in migrating fibroblasts. Localizes to centrosomes (By similarity). Localized to the core of macrophage podosomes (By similarity).</text>
</comment>
<comment type="alternative products">
    <event type="alternative splicing"/>
    <isoform>
        <id>Q13045-1</id>
        <name>1</name>
        <sequence type="displayed"/>
    </isoform>
    <isoform>
        <id>Q13045-2</id>
        <name>2</name>
        <sequence type="described" ref="VSP_044686 VSP_044687"/>
    </isoform>
    <isoform>
        <id>Q13045-3</id>
        <name>3</name>
        <sequence type="described" ref="VSP_046887"/>
    </isoform>
</comment>
<comment type="tissue specificity">
    <text evidence="12">Strongest expression in skeletal muscle with high expression also in the heart and lung.</text>
</comment>
<comment type="disease" evidence="9 11">
    <disease id="DI-06798">
        <name>Cardiomyopathy, dilated, 2J</name>
        <acronym>CMD2J</acronym>
        <description>A form of dilated cardiomyopathy, a disorder characterized by ventricular dilation and impaired systolic function, resulting in congestive heart failure and arrhythmia. Patients are at risk of premature death. CMD2J is an autosomal recessive form characterized by onset of heart failure within the first year of life.</description>
        <dbReference type="MIM" id="620635"/>
    </disease>
    <text>The disease is caused by variants affecting the gene represented in this entry.</text>
</comment>
<comment type="sequence caution" evidence="15">
    <conflict type="erroneous initiation">
        <sequence resource="EMBL-CDS" id="BAG58522"/>
    </conflict>
    <text>Truncated N-terminus.</text>
</comment>
<reference key="1">
    <citation type="journal article" date="1997" name="Genomics">
        <title>Genomic structure, evolution, and expression of human FLII, a gelsolin and leucine-rich-repeat family member: overlap with LLGL.</title>
        <authorList>
            <person name="Campbell H.D."/>
            <person name="Fountain S."/>
            <person name="Young I.G."/>
            <person name="Claudianos C."/>
            <person name="Hoheisel J.D."/>
            <person name="Chen K.-S."/>
            <person name="Lupski J.R."/>
        </authorList>
    </citation>
    <scope>NUCLEOTIDE SEQUENCE [GENOMIC DNA]</scope>
</reference>
<reference key="2">
    <citation type="journal article" date="2004" name="Nat. Genet.">
        <title>Complete sequencing and characterization of 21,243 full-length human cDNAs.</title>
        <authorList>
            <person name="Ota T."/>
            <person name="Suzuki Y."/>
            <person name="Nishikawa T."/>
            <person name="Otsuki T."/>
            <person name="Sugiyama T."/>
            <person name="Irie R."/>
            <person name="Wakamatsu A."/>
            <person name="Hayashi K."/>
            <person name="Sato H."/>
            <person name="Nagai K."/>
            <person name="Kimura K."/>
            <person name="Makita H."/>
            <person name="Sekine M."/>
            <person name="Obayashi M."/>
            <person name="Nishi T."/>
            <person name="Shibahara T."/>
            <person name="Tanaka T."/>
            <person name="Ishii S."/>
            <person name="Yamamoto J."/>
            <person name="Saito K."/>
            <person name="Kawai Y."/>
            <person name="Isono Y."/>
            <person name="Nakamura Y."/>
            <person name="Nagahari K."/>
            <person name="Murakami K."/>
            <person name="Yasuda T."/>
            <person name="Iwayanagi T."/>
            <person name="Wagatsuma M."/>
            <person name="Shiratori A."/>
            <person name="Sudo H."/>
            <person name="Hosoiri T."/>
            <person name="Kaku Y."/>
            <person name="Kodaira H."/>
            <person name="Kondo H."/>
            <person name="Sugawara M."/>
            <person name="Takahashi M."/>
            <person name="Kanda K."/>
            <person name="Yokoi T."/>
            <person name="Furuya T."/>
            <person name="Kikkawa E."/>
            <person name="Omura Y."/>
            <person name="Abe K."/>
            <person name="Kamihara K."/>
            <person name="Katsuta N."/>
            <person name="Sato K."/>
            <person name="Tanikawa M."/>
            <person name="Yamazaki M."/>
            <person name="Ninomiya K."/>
            <person name="Ishibashi T."/>
            <person name="Yamashita H."/>
            <person name="Murakawa K."/>
            <person name="Fujimori K."/>
            <person name="Tanai H."/>
            <person name="Kimata M."/>
            <person name="Watanabe M."/>
            <person name="Hiraoka S."/>
            <person name="Chiba Y."/>
            <person name="Ishida S."/>
            <person name="Ono Y."/>
            <person name="Takiguchi S."/>
            <person name="Watanabe S."/>
            <person name="Yosida M."/>
            <person name="Hotuta T."/>
            <person name="Kusano J."/>
            <person name="Kanehori K."/>
            <person name="Takahashi-Fujii A."/>
            <person name="Hara H."/>
            <person name="Tanase T.-O."/>
            <person name="Nomura Y."/>
            <person name="Togiya S."/>
            <person name="Komai F."/>
            <person name="Hara R."/>
            <person name="Takeuchi K."/>
            <person name="Arita M."/>
            <person name="Imose N."/>
            <person name="Musashino K."/>
            <person name="Yuuki H."/>
            <person name="Oshima A."/>
            <person name="Sasaki N."/>
            <person name="Aotsuka S."/>
            <person name="Yoshikawa Y."/>
            <person name="Matsunawa H."/>
            <person name="Ichihara T."/>
            <person name="Shiohata N."/>
            <person name="Sano S."/>
            <person name="Moriya S."/>
            <person name="Momiyama H."/>
            <person name="Satoh N."/>
            <person name="Takami S."/>
            <person name="Terashima Y."/>
            <person name="Suzuki O."/>
            <person name="Nakagawa S."/>
            <person name="Senoh A."/>
            <person name="Mizoguchi H."/>
            <person name="Goto Y."/>
            <person name="Shimizu F."/>
            <person name="Wakebe H."/>
            <person name="Hishigaki H."/>
            <person name="Watanabe T."/>
            <person name="Sugiyama A."/>
            <person name="Takemoto M."/>
            <person name="Kawakami B."/>
            <person name="Yamazaki M."/>
            <person name="Watanabe K."/>
            <person name="Kumagai A."/>
            <person name="Itakura S."/>
            <person name="Fukuzumi Y."/>
            <person name="Fujimori Y."/>
            <person name="Komiyama M."/>
            <person name="Tashiro H."/>
            <person name="Tanigami A."/>
            <person name="Fujiwara T."/>
            <person name="Ono T."/>
            <person name="Yamada K."/>
            <person name="Fujii Y."/>
            <person name="Ozaki K."/>
            <person name="Hirao M."/>
            <person name="Ohmori Y."/>
            <person name="Kawabata A."/>
            <person name="Hikiji T."/>
            <person name="Kobatake N."/>
            <person name="Inagaki H."/>
            <person name="Ikema Y."/>
            <person name="Okamoto S."/>
            <person name="Okitani R."/>
            <person name="Kawakami T."/>
            <person name="Noguchi S."/>
            <person name="Itoh T."/>
            <person name="Shigeta K."/>
            <person name="Senba T."/>
            <person name="Matsumura K."/>
            <person name="Nakajima Y."/>
            <person name="Mizuno T."/>
            <person name="Morinaga M."/>
            <person name="Sasaki M."/>
            <person name="Togashi T."/>
            <person name="Oyama M."/>
            <person name="Hata H."/>
            <person name="Watanabe M."/>
            <person name="Komatsu T."/>
            <person name="Mizushima-Sugano J."/>
            <person name="Satoh T."/>
            <person name="Shirai Y."/>
            <person name="Takahashi Y."/>
            <person name="Nakagawa K."/>
            <person name="Okumura K."/>
            <person name="Nagase T."/>
            <person name="Nomura N."/>
            <person name="Kikuchi H."/>
            <person name="Masuho Y."/>
            <person name="Yamashita R."/>
            <person name="Nakai K."/>
            <person name="Yada T."/>
            <person name="Nakamura Y."/>
            <person name="Ohara O."/>
            <person name="Isogai T."/>
            <person name="Sugano S."/>
        </authorList>
    </citation>
    <scope>NUCLEOTIDE SEQUENCE [LARGE SCALE MRNA] (ISOFORM 2)</scope>
    <source>
        <tissue>Hippocampus</tissue>
    </source>
</reference>
<reference key="3">
    <citation type="journal article" date="2006" name="Nature">
        <title>DNA sequence of human chromosome 17 and analysis of rearrangement in the human lineage.</title>
        <authorList>
            <person name="Zody M.C."/>
            <person name="Garber M."/>
            <person name="Adams D.J."/>
            <person name="Sharpe T."/>
            <person name="Harrow J."/>
            <person name="Lupski J.R."/>
            <person name="Nicholson C."/>
            <person name="Searle S.M."/>
            <person name="Wilming L."/>
            <person name="Young S.K."/>
            <person name="Abouelleil A."/>
            <person name="Allen N.R."/>
            <person name="Bi W."/>
            <person name="Bloom T."/>
            <person name="Borowsky M.L."/>
            <person name="Bugalter B.E."/>
            <person name="Butler J."/>
            <person name="Chang J.L."/>
            <person name="Chen C.-K."/>
            <person name="Cook A."/>
            <person name="Corum B."/>
            <person name="Cuomo C.A."/>
            <person name="de Jong P.J."/>
            <person name="DeCaprio D."/>
            <person name="Dewar K."/>
            <person name="FitzGerald M."/>
            <person name="Gilbert J."/>
            <person name="Gibson R."/>
            <person name="Gnerre S."/>
            <person name="Goldstein S."/>
            <person name="Grafham D.V."/>
            <person name="Grocock R."/>
            <person name="Hafez N."/>
            <person name="Hagopian D.S."/>
            <person name="Hart E."/>
            <person name="Norman C.H."/>
            <person name="Humphray S."/>
            <person name="Jaffe D.B."/>
            <person name="Jones M."/>
            <person name="Kamal M."/>
            <person name="Khodiyar V.K."/>
            <person name="LaButti K."/>
            <person name="Laird G."/>
            <person name="Lehoczky J."/>
            <person name="Liu X."/>
            <person name="Lokyitsang T."/>
            <person name="Loveland J."/>
            <person name="Lui A."/>
            <person name="Macdonald P."/>
            <person name="Major J.E."/>
            <person name="Matthews L."/>
            <person name="Mauceli E."/>
            <person name="McCarroll S.A."/>
            <person name="Mihalev A.H."/>
            <person name="Mudge J."/>
            <person name="Nguyen C."/>
            <person name="Nicol R."/>
            <person name="O'Leary S.B."/>
            <person name="Osoegawa K."/>
            <person name="Schwartz D.C."/>
            <person name="Shaw-Smith C."/>
            <person name="Stankiewicz P."/>
            <person name="Steward C."/>
            <person name="Swarbreck D."/>
            <person name="Venkataraman V."/>
            <person name="Whittaker C.A."/>
            <person name="Yang X."/>
            <person name="Zimmer A.R."/>
            <person name="Bradley A."/>
            <person name="Hubbard T."/>
            <person name="Birren B.W."/>
            <person name="Rogers J."/>
            <person name="Lander E.S."/>
            <person name="Nusbaum C."/>
        </authorList>
    </citation>
    <scope>NUCLEOTIDE SEQUENCE [LARGE SCALE GENOMIC DNA]</scope>
</reference>
<reference key="4">
    <citation type="journal article" date="2004" name="Genome Res.">
        <title>The status, quality, and expansion of the NIH full-length cDNA project: the Mammalian Gene Collection (MGC).</title>
        <authorList>
            <consortium name="The MGC Project Team"/>
        </authorList>
    </citation>
    <scope>NUCLEOTIDE SEQUENCE [LARGE SCALE MRNA] (ISOFORM 1)</scope>
    <source>
        <tissue>Kidney</tissue>
    </source>
</reference>
<reference key="5">
    <citation type="journal article" date="2003" name="Nat. Biotechnol.">
        <title>Exploring proteomes and analyzing protein processing by mass spectrometric identification of sorted N-terminal peptides.</title>
        <authorList>
            <person name="Gevaert K."/>
            <person name="Goethals M."/>
            <person name="Martens L."/>
            <person name="Van Damme J."/>
            <person name="Staes A."/>
            <person name="Thomas G.R."/>
            <person name="Vandekerckhove J."/>
        </authorList>
    </citation>
    <scope>PROTEIN SEQUENCE OF 1-11</scope>
    <scope>ACETYLATION AT MET-1</scope>
    <source>
        <tissue>Platelet</tissue>
    </source>
</reference>
<reference key="6">
    <citation type="journal article" date="1993" name="Proc. Natl. Acad. Sci. U.S.A.">
        <title>The Drosophila melanogaster flightless-I gene involved in gastrulation and muscle degeneration encodes gelsolin-like and leucine-rich repeat domains and is conserved in Caenorhabditis elegans and humans.</title>
        <authorList>
            <person name="Campbell H.D."/>
            <person name="Schimansky T."/>
            <person name="Claudianos C."/>
            <person name="Ozsarac N."/>
            <person name="Kasprzak A.B."/>
            <person name="Cotsell J.N."/>
            <person name="Young I.G."/>
            <person name="de Couet H.G."/>
            <person name="Miklos G.L.G."/>
        </authorList>
    </citation>
    <scope>NUCLEOTIDE SEQUENCE [MRNA] OF 2-1269 (ISOFORM 1)</scope>
    <source>
        <tissue>Hippocampus</tissue>
    </source>
</reference>
<reference key="7">
    <citation type="journal article" date="1998" name="J. Biol. Chem.">
        <title>Identification of the binding partners for flightless I, a novel protein bridging the leucine-rich repeat and the gelsolin superfamilies.</title>
        <authorList>
            <person name="Liu Y.-T."/>
            <person name="Yin H.L."/>
        </authorList>
    </citation>
    <scope>INTERACTION WITH ACTIN AND LRRFIP1</scope>
    <scope>TISSUE SPECIFICITY</scope>
</reference>
<reference key="8">
    <citation type="journal article" date="1998" name="Nucleic Acids Res.">
        <title>TRIP: a novel double stranded RNA binding protein which interacts with the leucine rich repeat of flightless I.</title>
        <authorList>
            <person name="Wilson S.A."/>
            <person name="Brown E.C."/>
            <person name="Kingsman A.J."/>
            <person name="Kingsman S.M."/>
        </authorList>
    </citation>
    <scope>INTERACTION WITH LRRFIP1</scope>
</reference>
<reference key="9">
    <citation type="journal article" date="1999" name="Genomics">
        <title>Novel proteins interacting with the leucine-rich repeat domain of human flightless-I identified by the yeast two-hybrid system.</title>
        <authorList>
            <person name="Fong K.S.K."/>
            <person name="de Couet H.G."/>
        </authorList>
    </citation>
    <scope>INTERACTION WITH LRRFIP1 AND LRRFIP2</scope>
    <source>
        <tissue>Skeletal muscle</tissue>
    </source>
</reference>
<reference key="10">
    <citation type="journal article" date="2004" name="Mol. Cell. Biol.">
        <title>Developmentally essential protein flightless I is a nuclear receptor coactivator with actin binding activity.</title>
        <authorList>
            <person name="Lee Y.-H."/>
            <person name="Campbell H.D."/>
            <person name="Stallcup M.R."/>
        </authorList>
    </citation>
    <scope>FUNCTION</scope>
    <scope>INTERACTION WITH CARM1; ESR1; THRB; NCOA2 AND ACTL6A</scope>
    <scope>MUTAGENESIS OF GLU-586 AND GLY-603</scope>
</reference>
<reference key="11">
    <citation type="journal article" date="2006" name="Cell">
        <title>Global, in vivo, and site-specific phosphorylation dynamics in signaling networks.</title>
        <authorList>
            <person name="Olsen J.V."/>
            <person name="Blagoev B."/>
            <person name="Gnad F."/>
            <person name="Macek B."/>
            <person name="Kumar C."/>
            <person name="Mortensen P."/>
            <person name="Mann M."/>
        </authorList>
    </citation>
    <scope>PHOSPHORYLATION [LARGE SCALE ANALYSIS] AT SER-856</scope>
    <scope>IDENTIFICATION BY MASS SPECTROMETRY [LARGE SCALE ANALYSIS]</scope>
    <source>
        <tissue>Cervix carcinoma</tissue>
    </source>
</reference>
<reference key="12">
    <citation type="journal article" date="2006" name="Nat. Biotechnol.">
        <title>A probability-based approach for high-throughput protein phosphorylation analysis and site localization.</title>
        <authorList>
            <person name="Beausoleil S.A."/>
            <person name="Villen J."/>
            <person name="Gerber S.A."/>
            <person name="Rush J."/>
            <person name="Gygi S.P."/>
        </authorList>
    </citation>
    <scope>PHOSPHORYLATION [LARGE SCALE ANALYSIS] AT SER-406 AND SER-856</scope>
    <scope>IDENTIFICATION BY MASS SPECTROMETRY [LARGE SCALE ANALYSIS]</scope>
    <source>
        <tissue>Cervix carcinoma</tissue>
    </source>
</reference>
<reference key="13">
    <citation type="journal article" date="2008" name="Mol. Cell">
        <title>Kinase-selective enrichment enables quantitative phosphoproteomics of the kinome across the cell cycle.</title>
        <authorList>
            <person name="Daub H."/>
            <person name="Olsen J.V."/>
            <person name="Bairlein M."/>
            <person name="Gnad F."/>
            <person name="Oppermann F.S."/>
            <person name="Korner R."/>
            <person name="Greff Z."/>
            <person name="Keri G."/>
            <person name="Stemmann O."/>
            <person name="Mann M."/>
        </authorList>
    </citation>
    <scope>PHOSPHORYLATION [LARGE SCALE ANALYSIS] AT SER-856</scope>
    <scope>IDENTIFICATION BY MASS SPECTROMETRY [LARGE SCALE ANALYSIS]</scope>
    <source>
        <tissue>Cervix carcinoma</tissue>
    </source>
</reference>
<reference key="14">
    <citation type="journal article" date="2008" name="Proc. Natl. Acad. Sci. U.S.A.">
        <title>A quantitative atlas of mitotic phosphorylation.</title>
        <authorList>
            <person name="Dephoure N."/>
            <person name="Zhou C."/>
            <person name="Villen J."/>
            <person name="Beausoleil S.A."/>
            <person name="Bakalarski C.E."/>
            <person name="Elledge S.J."/>
            <person name="Gygi S.P."/>
        </authorList>
    </citation>
    <scope>PHOSPHORYLATION [LARGE SCALE ANALYSIS] AT SER-856</scope>
    <scope>IDENTIFICATION BY MASS SPECTROMETRY [LARGE SCALE ANALYSIS]</scope>
    <source>
        <tissue>Cervix carcinoma</tissue>
    </source>
</reference>
<reference key="15">
    <citation type="journal article" date="2009" name="Anal. Chem.">
        <title>Lys-N and trypsin cover complementary parts of the phosphoproteome in a refined SCX-based approach.</title>
        <authorList>
            <person name="Gauci S."/>
            <person name="Helbig A.O."/>
            <person name="Slijper M."/>
            <person name="Krijgsveld J."/>
            <person name="Heck A.J."/>
            <person name="Mohammed S."/>
        </authorList>
    </citation>
    <scope>IDENTIFICATION BY MASS SPECTROMETRY [LARGE SCALE ANALYSIS]</scope>
</reference>
<reference key="16">
    <citation type="journal article" date="2009" name="J. Biol. Chem.">
        <title>Identification of Flightless-I as a substrate of the cytokine-independent survival kinase CISK.</title>
        <authorList>
            <person name="Xu J."/>
            <person name="Liao L."/>
            <person name="Qin J."/>
            <person name="Xu J."/>
            <person name="Liu D."/>
            <person name="Songyang Z."/>
        </authorList>
    </citation>
    <scope>PHOSPHORYLATION AT SER-436 AND THR-818</scope>
    <scope>INTERACTION WITH SGK3</scope>
</reference>
<reference key="17">
    <citation type="journal article" date="2009" name="J. Immunol.">
        <title>Modulation of TLR signaling by multiple MyD88-interacting partners including leucine-rich repeat Fli-I-interacting proteins.</title>
        <authorList>
            <person name="Dai P."/>
            <person name="Jeong S.Y."/>
            <person name="Yu Y."/>
            <person name="Leng T."/>
            <person name="Wu W."/>
            <person name="Xie L."/>
            <person name="Chen X."/>
        </authorList>
    </citation>
    <scope>INTERACTION WITH LRRFIP1; LRRFIP2 AND MYD88</scope>
</reference>
<reference key="18">
    <citation type="journal article" date="2009" name="Sci. Signal.">
        <title>Quantitative phosphoproteomic analysis of T cell receptor signaling reveals system-wide modulation of protein-protein interactions.</title>
        <authorList>
            <person name="Mayya V."/>
            <person name="Lundgren D.H."/>
            <person name="Hwang S.-I."/>
            <person name="Rezaul K."/>
            <person name="Wu L."/>
            <person name="Eng J.K."/>
            <person name="Rodionov V."/>
            <person name="Han D.K."/>
        </authorList>
    </citation>
    <scope>PHOSPHORYLATION [LARGE SCALE ANALYSIS] AT SER-856</scope>
    <scope>IDENTIFICATION BY MASS SPECTROMETRY [LARGE SCALE ANALYSIS]</scope>
    <source>
        <tissue>Leukemic T-cell</tissue>
    </source>
</reference>
<reference key="19">
    <citation type="journal article" date="2009" name="Science">
        <title>Lysine acetylation targets protein complexes and co-regulates major cellular functions.</title>
        <authorList>
            <person name="Choudhary C."/>
            <person name="Kumar C."/>
            <person name="Gnad F."/>
            <person name="Nielsen M.L."/>
            <person name="Rehman M."/>
            <person name="Walther T.C."/>
            <person name="Olsen J.V."/>
            <person name="Mann M."/>
        </authorList>
    </citation>
    <scope>ACETYLATION [LARGE SCALE ANALYSIS] AT LYS-21</scope>
    <scope>IDENTIFICATION BY MASS SPECTROMETRY [LARGE SCALE ANALYSIS]</scope>
</reference>
<reference key="20">
    <citation type="journal article" date="2010" name="Sci. Signal.">
        <title>Quantitative phosphoproteomics reveals widespread full phosphorylation site occupancy during mitosis.</title>
        <authorList>
            <person name="Olsen J.V."/>
            <person name="Vermeulen M."/>
            <person name="Santamaria A."/>
            <person name="Kumar C."/>
            <person name="Miller M.L."/>
            <person name="Jensen L.J."/>
            <person name="Gnad F."/>
            <person name="Cox J."/>
            <person name="Jensen T.S."/>
            <person name="Nigg E.A."/>
            <person name="Brunak S."/>
            <person name="Mann M."/>
        </authorList>
    </citation>
    <scope>PHOSPHORYLATION [LARGE SCALE ANALYSIS] AT SER-406; SER-436 AND SER-856</scope>
    <scope>IDENTIFICATION BY MASS SPECTROMETRY [LARGE SCALE ANALYSIS]</scope>
    <source>
        <tissue>Cervix carcinoma</tissue>
    </source>
</reference>
<reference key="21">
    <citation type="journal article" date="2011" name="BMC Syst. Biol.">
        <title>Initial characterization of the human central proteome.</title>
        <authorList>
            <person name="Burkard T.R."/>
            <person name="Planyavsky M."/>
            <person name="Kaupe I."/>
            <person name="Breitwieser F.P."/>
            <person name="Buerckstuemmer T."/>
            <person name="Bennett K.L."/>
            <person name="Superti-Furga G."/>
            <person name="Colinge J."/>
        </authorList>
    </citation>
    <scope>IDENTIFICATION BY MASS SPECTROMETRY [LARGE SCALE ANALYSIS]</scope>
</reference>
<reference key="22">
    <citation type="journal article" date="2011" name="Sci. Signal.">
        <title>System-wide temporal characterization of the proteome and phosphoproteome of human embryonic stem cell differentiation.</title>
        <authorList>
            <person name="Rigbolt K.T."/>
            <person name="Prokhorova T.A."/>
            <person name="Akimov V."/>
            <person name="Henningsen J."/>
            <person name="Johansen P.T."/>
            <person name="Kratchmarova I."/>
            <person name="Kassem M."/>
            <person name="Mann M."/>
            <person name="Olsen J.V."/>
            <person name="Blagoev B."/>
        </authorList>
    </citation>
    <scope>PHOSPHORYLATION [LARGE SCALE ANALYSIS] AT SER-436 AND SER-856</scope>
    <scope>IDENTIFICATION BY MASS SPECTROMETRY [LARGE SCALE ANALYSIS]</scope>
</reference>
<reference key="23">
    <citation type="journal article" date="2012" name="Mol. Cell. Proteomics">
        <title>Comparative large-scale characterisation of plant vs. mammal proteins reveals similar and idiosyncratic N-alpha acetylation features.</title>
        <authorList>
            <person name="Bienvenut W.V."/>
            <person name="Sumpton D."/>
            <person name="Martinez A."/>
            <person name="Lilla S."/>
            <person name="Espagne C."/>
            <person name="Meinnel T."/>
            <person name="Giglione C."/>
        </authorList>
    </citation>
    <scope>ACETYLATION [LARGE SCALE ANALYSIS] AT MET-1</scope>
    <scope>IDENTIFICATION BY MASS SPECTROMETRY [LARGE SCALE ANALYSIS]</scope>
</reference>
<reference key="24">
    <citation type="journal article" date="2012" name="Proc. Natl. Acad. Sci. U.S.A.">
        <title>N-terminal acetylome analyses and functional insights of the N-terminal acetyltransferase NatB.</title>
        <authorList>
            <person name="Van Damme P."/>
            <person name="Lasa M."/>
            <person name="Polevoda B."/>
            <person name="Gazquez C."/>
            <person name="Elosegui-Artola A."/>
            <person name="Kim D.S."/>
            <person name="De Juan-Pardo E."/>
            <person name="Demeyer K."/>
            <person name="Hole K."/>
            <person name="Larrea E."/>
            <person name="Timmerman E."/>
            <person name="Prieto J."/>
            <person name="Arnesen T."/>
            <person name="Sherman F."/>
            <person name="Gevaert K."/>
            <person name="Aldabe R."/>
        </authorList>
    </citation>
    <scope>ACETYLATION [LARGE SCALE ANALYSIS] AT MET-1</scope>
    <scope>IDENTIFICATION BY MASS SPECTROMETRY [LARGE SCALE ANALYSIS]</scope>
</reference>
<reference key="25">
    <citation type="journal article" date="2013" name="J. Proteome Res.">
        <title>Toward a comprehensive characterization of a human cancer cell phosphoproteome.</title>
        <authorList>
            <person name="Zhou H."/>
            <person name="Di Palma S."/>
            <person name="Preisinger C."/>
            <person name="Peng M."/>
            <person name="Polat A.N."/>
            <person name="Heck A.J."/>
            <person name="Mohammed S."/>
        </authorList>
    </citation>
    <scope>PHOSPHORYLATION [LARGE SCALE ANALYSIS] AT SER-406; SER-856 AND SER-860</scope>
    <scope>IDENTIFICATION BY MASS SPECTROMETRY [LARGE SCALE ANALYSIS]</scope>
    <source>
        <tissue>Cervix carcinoma</tissue>
        <tissue>Erythroleukemia</tissue>
    </source>
</reference>
<reference key="26">
    <citation type="journal article" date="2014" name="J. Proteomics">
        <title>An enzyme assisted RP-RPLC approach for in-depth analysis of human liver phosphoproteome.</title>
        <authorList>
            <person name="Bian Y."/>
            <person name="Song C."/>
            <person name="Cheng K."/>
            <person name="Dong M."/>
            <person name="Wang F."/>
            <person name="Huang J."/>
            <person name="Sun D."/>
            <person name="Wang L."/>
            <person name="Ye M."/>
            <person name="Zou H."/>
        </authorList>
    </citation>
    <scope>PHOSPHORYLATION [LARGE SCALE ANALYSIS] AT SER-436 AND SER-856</scope>
    <scope>IDENTIFICATION BY MASS SPECTROMETRY [LARGE SCALE ANALYSIS]</scope>
    <source>
        <tissue>Liver</tissue>
    </source>
</reference>
<reference key="27">
    <citation type="journal article" date="2023" name="Proc. Natl. Acad. Sci. U.S.A.">
        <title>A human FLII gene variant alters sarcomeric actin thin filament length and predisposes to cardiomyopathy.</title>
        <authorList>
            <person name="Kuwabara Y."/>
            <person name="York A.J."/>
            <person name="Lin S.C."/>
            <person name="Sargent M.A."/>
            <person name="Grimes K.M."/>
            <person name="Pirruccello J.P."/>
            <person name="Molkentin J.D."/>
        </authorList>
    </citation>
    <scope>INTERACTION WITH TMOD3</scope>
</reference>
<reference key="28">
    <citation type="journal article" date="2020" name="Circ. Genom. Precis. Med.">
        <title>Categorized genetic analysis in childhood-onset cardiomyopathy.</title>
        <authorList>
            <person name="Al-Hassnan Z.N."/>
            <person name="Almesned A."/>
            <person name="Tulbah S."/>
            <person name="Alakhfash A."/>
            <person name="Alhadeq F."/>
            <person name="Alruwaili N."/>
            <person name="Alkorashy M."/>
            <person name="Alhashem A."/>
            <person name="Alrashdan A."/>
            <person name="Faqeih E."/>
            <person name="Alkhalifi S.M."/>
            <person name="Al Humaidi Z."/>
            <person name="Sogaty S."/>
            <person name="Azhari N."/>
            <person name="Bakhaider A.M."/>
            <person name="Al Asmari A."/>
            <person name="Awaji A."/>
            <person name="Albash B."/>
            <person name="Alhabdan M."/>
            <person name="Alghamdi M.A."/>
            <person name="Alshuaibi W."/>
            <person name="Al-Hassnan R.Z."/>
            <person name="Alshenqiti A."/>
            <person name="Alqahtani A."/>
            <person name="Shinwari Z."/>
            <person name="Rbabeh M."/>
            <person name="Takroni S."/>
            <person name="Alomrani A."/>
            <person name="Albert Brotons D.C."/>
            <person name="Alqwaee A.M."/>
            <person name="Almanea W."/>
            <person name="Alfadley F.A."/>
            <person name="Alfayyadh M."/>
            <person name="Alwadai A."/>
        </authorList>
    </citation>
    <scope>VARIANTS CMD2J VAL-674 AND CYS-1240</scope>
    <scope>INVOLVEMENT IN CMD2J</scope>
</reference>
<reference key="29">
    <citation type="journal article" date="2023" name="JCI Insight">
        <title>Biallelic variants in FLII cause pediatric cardiomyopathy by disrupting cardiomyocyte cell adhesion and myofibril organization.</title>
        <authorList>
            <person name="Ruijmbeek C.W."/>
            <person name="Housley F."/>
            <person name="Idrees H."/>
            <person name="Housley M.P."/>
            <person name="Pestel J."/>
            <person name="Keller L."/>
            <person name="Lai J.K."/>
            <person name="der Linde H.C.V."/>
            <person name="Willemsen R."/>
            <person name="Piesker J."/>
            <person name="Al-Hassnan Z.N."/>
            <person name="Almesned A."/>
            <person name="Dalinghaus M."/>
            <person name="den Bersselaar L.M.V."/>
            <person name="van Slegtenhorst M.A."/>
            <person name="Tessadori F."/>
            <person name="Bakkers J."/>
            <person name="van Ham T.J."/>
            <person name="Stainier D.Y."/>
            <person name="Verhagen J.M."/>
            <person name="Reischauer S."/>
        </authorList>
    </citation>
    <scope>VARIANTS CMD2J 454-GLN--ALA-1269 DEL AND TRP-1168</scope>
    <scope>INVOLVEMENT IN CMD2J</scope>
    <scope>CHARACTERIZATION OF VARIANT CMD2J CYS-1240</scope>
</reference>
<protein>
    <recommendedName>
        <fullName>Protein flightless-1 homolog</fullName>
    </recommendedName>
</protein>
<organism>
    <name type="scientific">Homo sapiens</name>
    <name type="common">Human</name>
    <dbReference type="NCBI Taxonomy" id="9606"/>
    <lineage>
        <taxon>Eukaryota</taxon>
        <taxon>Metazoa</taxon>
        <taxon>Chordata</taxon>
        <taxon>Craniata</taxon>
        <taxon>Vertebrata</taxon>
        <taxon>Euteleostomi</taxon>
        <taxon>Mammalia</taxon>
        <taxon>Eutheria</taxon>
        <taxon>Euarchontoglires</taxon>
        <taxon>Primates</taxon>
        <taxon>Haplorrhini</taxon>
        <taxon>Catarrhini</taxon>
        <taxon>Hominidae</taxon>
        <taxon>Homo</taxon>
    </lineage>
</organism>